<reference key="1">
    <citation type="journal article" date="2003" name="Appl. Microbiol. Biotechnol.">
        <title>The Corynebacterium glutamicum genome: features and impacts on biotechnological processes.</title>
        <authorList>
            <person name="Ikeda M."/>
            <person name="Nakagawa S."/>
        </authorList>
    </citation>
    <scope>NUCLEOTIDE SEQUENCE [LARGE SCALE GENOMIC DNA]</scope>
    <source>
        <strain>ATCC 13032 / DSM 20300 / JCM 1318 / BCRC 11384 / CCUG 27702 / LMG 3730 / NBRC 12168 / NCIMB 10025 / NRRL B-2784 / 534</strain>
    </source>
</reference>
<reference key="2">
    <citation type="journal article" date="2003" name="J. Biotechnol.">
        <title>The complete Corynebacterium glutamicum ATCC 13032 genome sequence and its impact on the production of L-aspartate-derived amino acids and vitamins.</title>
        <authorList>
            <person name="Kalinowski J."/>
            <person name="Bathe B."/>
            <person name="Bartels D."/>
            <person name="Bischoff N."/>
            <person name="Bott M."/>
            <person name="Burkovski A."/>
            <person name="Dusch N."/>
            <person name="Eggeling L."/>
            <person name="Eikmanns B.J."/>
            <person name="Gaigalat L."/>
            <person name="Goesmann A."/>
            <person name="Hartmann M."/>
            <person name="Huthmacher K."/>
            <person name="Kraemer R."/>
            <person name="Linke B."/>
            <person name="McHardy A.C."/>
            <person name="Meyer F."/>
            <person name="Moeckel B."/>
            <person name="Pfefferle W."/>
            <person name="Puehler A."/>
            <person name="Rey D.A."/>
            <person name="Rueckert C."/>
            <person name="Rupp O."/>
            <person name="Sahm H."/>
            <person name="Wendisch V.F."/>
            <person name="Wiegraebe I."/>
            <person name="Tauch A."/>
        </authorList>
    </citation>
    <scope>NUCLEOTIDE SEQUENCE [LARGE SCALE GENOMIC DNA]</scope>
    <source>
        <strain>ATCC 13032 / DSM 20300 / JCM 1318 / BCRC 11384 / CCUG 27702 / LMG 3730 / NBRC 12168 / NCIMB 10025 / NRRL B-2784 / 534</strain>
    </source>
</reference>
<keyword id="KW-1185">Reference proteome</keyword>
<keyword id="KW-0687">Ribonucleoprotein</keyword>
<keyword id="KW-0689">Ribosomal protein</keyword>
<keyword id="KW-0694">RNA-binding</keyword>
<keyword id="KW-0699">rRNA-binding</keyword>
<organism>
    <name type="scientific">Corynebacterium glutamicum (strain ATCC 13032 / DSM 20300 / JCM 1318 / BCRC 11384 / CCUG 27702 / LMG 3730 / NBRC 12168 / NCIMB 10025 / NRRL B-2784 / 534)</name>
    <dbReference type="NCBI Taxonomy" id="196627"/>
    <lineage>
        <taxon>Bacteria</taxon>
        <taxon>Bacillati</taxon>
        <taxon>Actinomycetota</taxon>
        <taxon>Actinomycetes</taxon>
        <taxon>Mycobacteriales</taxon>
        <taxon>Corynebacteriaceae</taxon>
        <taxon>Corynebacterium</taxon>
    </lineage>
</organism>
<accession>Q8NT05</accession>
<sequence>MAIRKYKPTTPGRRASSVSMFTEITRSTPEKSLLRPLSKTGGRNSHGHITTRHRGGGHKRRYRVIDFRRNDKDGVLAKVAHIEYDPNRTANIALLHYFDGEKRYILAPKGLTQGTVIESGAAADIKVGNNLPLRNIPTGTTIHNVELKPGAGAKLARSAGASIQLLGKEGSYAVLRMPSSEIRRVDIRCRATVGEVGNAEQINIRWGKAGRMRWKGWRPTVRGVVMNPVDHPHGGGEGKTSGGRHPVSPWGQKEGRTRKPKRYSDDMIVRRRRANKNKKR</sequence>
<proteinExistence type="inferred from homology"/>
<name>RL2_CORGL</name>
<protein>
    <recommendedName>
        <fullName evidence="1">Large ribosomal subunit protein uL2</fullName>
    </recommendedName>
    <alternativeName>
        <fullName evidence="3">50S ribosomal protein L2</fullName>
    </alternativeName>
</protein>
<comment type="function">
    <text evidence="1">One of the primary rRNA binding proteins. Required for association of the 30S and 50S subunits to form the 70S ribosome, for tRNA binding and peptide bond formation. It has been suggested to have peptidyltransferase activity; this is somewhat controversial. Makes several contacts with the 16S rRNA in the 70S ribosome.</text>
</comment>
<comment type="subunit">
    <text evidence="1">Part of the 50S ribosomal subunit. Forms a bridge to the 30S subunit in the 70S ribosome.</text>
</comment>
<comment type="similarity">
    <text evidence="1">Belongs to the universal ribosomal protein uL2 family.</text>
</comment>
<evidence type="ECO:0000255" key="1">
    <source>
        <dbReference type="HAMAP-Rule" id="MF_01320"/>
    </source>
</evidence>
<evidence type="ECO:0000256" key="2">
    <source>
        <dbReference type="SAM" id="MobiDB-lite"/>
    </source>
</evidence>
<evidence type="ECO:0000305" key="3"/>
<dbReference type="EMBL" id="BA000036">
    <property type="protein sequence ID" value="BAB97903.1"/>
    <property type="molecule type" value="Genomic_DNA"/>
</dbReference>
<dbReference type="EMBL" id="BX927149">
    <property type="protein sequence ID" value="CAF19220.1"/>
    <property type="molecule type" value="Genomic_DNA"/>
</dbReference>
<dbReference type="RefSeq" id="NP_599751.1">
    <property type="nucleotide sequence ID" value="NC_003450.3"/>
</dbReference>
<dbReference type="RefSeq" id="WP_003854295.1">
    <property type="nucleotide sequence ID" value="NC_006958.1"/>
</dbReference>
<dbReference type="SMR" id="Q8NT05"/>
<dbReference type="STRING" id="196627.cg0598"/>
<dbReference type="GeneID" id="1021510"/>
<dbReference type="KEGG" id="cgb:cg0598"/>
<dbReference type="KEGG" id="cgl:Cgl0510"/>
<dbReference type="PATRIC" id="fig|196627.13.peg.506"/>
<dbReference type="eggNOG" id="COG0090">
    <property type="taxonomic scope" value="Bacteria"/>
</dbReference>
<dbReference type="HOGENOM" id="CLU_036235_2_1_11"/>
<dbReference type="OrthoDB" id="9778722at2"/>
<dbReference type="BioCyc" id="CORYNE:G18NG-10072-MONOMER"/>
<dbReference type="Proteomes" id="UP000000582">
    <property type="component" value="Chromosome"/>
</dbReference>
<dbReference type="Proteomes" id="UP000001009">
    <property type="component" value="Chromosome"/>
</dbReference>
<dbReference type="GO" id="GO:0015934">
    <property type="term" value="C:large ribosomal subunit"/>
    <property type="evidence" value="ECO:0007669"/>
    <property type="project" value="InterPro"/>
</dbReference>
<dbReference type="GO" id="GO:0019843">
    <property type="term" value="F:rRNA binding"/>
    <property type="evidence" value="ECO:0007669"/>
    <property type="project" value="UniProtKB-UniRule"/>
</dbReference>
<dbReference type="GO" id="GO:0003735">
    <property type="term" value="F:structural constituent of ribosome"/>
    <property type="evidence" value="ECO:0007669"/>
    <property type="project" value="InterPro"/>
</dbReference>
<dbReference type="GO" id="GO:0016740">
    <property type="term" value="F:transferase activity"/>
    <property type="evidence" value="ECO:0007669"/>
    <property type="project" value="InterPro"/>
</dbReference>
<dbReference type="GO" id="GO:0002181">
    <property type="term" value="P:cytoplasmic translation"/>
    <property type="evidence" value="ECO:0007669"/>
    <property type="project" value="TreeGrafter"/>
</dbReference>
<dbReference type="FunFam" id="2.30.30.30:FF:000001">
    <property type="entry name" value="50S ribosomal protein L2"/>
    <property type="match status" value="1"/>
</dbReference>
<dbReference type="FunFam" id="2.40.50.140:FF:000003">
    <property type="entry name" value="50S ribosomal protein L2"/>
    <property type="match status" value="1"/>
</dbReference>
<dbReference type="FunFam" id="4.10.950.10:FF:000001">
    <property type="entry name" value="50S ribosomal protein L2"/>
    <property type="match status" value="1"/>
</dbReference>
<dbReference type="Gene3D" id="2.30.30.30">
    <property type="match status" value="1"/>
</dbReference>
<dbReference type="Gene3D" id="2.40.50.140">
    <property type="entry name" value="Nucleic acid-binding proteins"/>
    <property type="match status" value="1"/>
</dbReference>
<dbReference type="Gene3D" id="4.10.950.10">
    <property type="entry name" value="Ribosomal protein L2, domain 3"/>
    <property type="match status" value="1"/>
</dbReference>
<dbReference type="HAMAP" id="MF_01320_B">
    <property type="entry name" value="Ribosomal_uL2_B"/>
    <property type="match status" value="1"/>
</dbReference>
<dbReference type="InterPro" id="IPR012340">
    <property type="entry name" value="NA-bd_OB-fold"/>
</dbReference>
<dbReference type="InterPro" id="IPR014722">
    <property type="entry name" value="Rib_uL2_dom2"/>
</dbReference>
<dbReference type="InterPro" id="IPR002171">
    <property type="entry name" value="Ribosomal_uL2"/>
</dbReference>
<dbReference type="InterPro" id="IPR005880">
    <property type="entry name" value="Ribosomal_uL2_bac/org-type"/>
</dbReference>
<dbReference type="InterPro" id="IPR022669">
    <property type="entry name" value="Ribosomal_uL2_C"/>
</dbReference>
<dbReference type="InterPro" id="IPR022671">
    <property type="entry name" value="Ribosomal_uL2_CS"/>
</dbReference>
<dbReference type="InterPro" id="IPR014726">
    <property type="entry name" value="Ribosomal_uL2_dom3"/>
</dbReference>
<dbReference type="InterPro" id="IPR022666">
    <property type="entry name" value="Ribosomal_uL2_RNA-bd_dom"/>
</dbReference>
<dbReference type="InterPro" id="IPR008991">
    <property type="entry name" value="Translation_prot_SH3-like_sf"/>
</dbReference>
<dbReference type="NCBIfam" id="TIGR01171">
    <property type="entry name" value="rplB_bact"/>
    <property type="match status" value="1"/>
</dbReference>
<dbReference type="PANTHER" id="PTHR13691:SF5">
    <property type="entry name" value="LARGE RIBOSOMAL SUBUNIT PROTEIN UL2M"/>
    <property type="match status" value="1"/>
</dbReference>
<dbReference type="PANTHER" id="PTHR13691">
    <property type="entry name" value="RIBOSOMAL PROTEIN L2"/>
    <property type="match status" value="1"/>
</dbReference>
<dbReference type="Pfam" id="PF00181">
    <property type="entry name" value="Ribosomal_L2"/>
    <property type="match status" value="1"/>
</dbReference>
<dbReference type="Pfam" id="PF03947">
    <property type="entry name" value="Ribosomal_L2_C"/>
    <property type="match status" value="1"/>
</dbReference>
<dbReference type="PIRSF" id="PIRSF002158">
    <property type="entry name" value="Ribosomal_L2"/>
    <property type="match status" value="1"/>
</dbReference>
<dbReference type="SMART" id="SM01383">
    <property type="entry name" value="Ribosomal_L2"/>
    <property type="match status" value="1"/>
</dbReference>
<dbReference type="SMART" id="SM01382">
    <property type="entry name" value="Ribosomal_L2_C"/>
    <property type="match status" value="1"/>
</dbReference>
<dbReference type="SUPFAM" id="SSF50249">
    <property type="entry name" value="Nucleic acid-binding proteins"/>
    <property type="match status" value="1"/>
</dbReference>
<dbReference type="SUPFAM" id="SSF50104">
    <property type="entry name" value="Translation proteins SH3-like domain"/>
    <property type="match status" value="1"/>
</dbReference>
<dbReference type="PROSITE" id="PS00467">
    <property type="entry name" value="RIBOSOMAL_L2"/>
    <property type="match status" value="1"/>
</dbReference>
<feature type="chain" id="PRO_0000129556" description="Large ribosomal subunit protein uL2">
    <location>
        <begin position="1"/>
        <end position="280"/>
    </location>
</feature>
<feature type="region of interest" description="Disordered" evidence="2">
    <location>
        <begin position="29"/>
        <end position="58"/>
    </location>
</feature>
<feature type="region of interest" description="Disordered" evidence="2">
    <location>
        <begin position="225"/>
        <end position="280"/>
    </location>
</feature>
<feature type="compositionally biased region" description="Basic residues" evidence="2">
    <location>
        <begin position="45"/>
        <end position="58"/>
    </location>
</feature>
<feature type="compositionally biased region" description="Basic and acidic residues" evidence="2">
    <location>
        <begin position="253"/>
        <end position="269"/>
    </location>
</feature>
<feature type="compositionally biased region" description="Basic residues" evidence="2">
    <location>
        <begin position="270"/>
        <end position="280"/>
    </location>
</feature>
<gene>
    <name evidence="1" type="primary">rplB</name>
    <name type="ordered locus">Cgl0510</name>
    <name type="ordered locus">cg0598</name>
</gene>